<name>VMAT1_RAT</name>
<accession>Q01818</accession>
<keyword id="KW-0968">Cytoplasmic vesicle</keyword>
<keyword id="KW-0325">Glycoprotein</keyword>
<keyword id="KW-0472">Membrane</keyword>
<keyword id="KW-0532">Neurotransmitter transport</keyword>
<keyword id="KW-1185">Reference proteome</keyword>
<keyword id="KW-0770">Synapse</keyword>
<keyword id="KW-0812">Transmembrane</keyword>
<keyword id="KW-1133">Transmembrane helix</keyword>
<keyword id="KW-0813">Transport</keyword>
<gene>
    <name type="primary">Slc18a1</name>
    <name evidence="6" type="synonym">Cgat</name>
    <name type="synonym">Vmat1</name>
</gene>
<proteinExistence type="evidence at protein level"/>
<comment type="function">
    <text evidence="1 4 5">Electrogenic antiporter that exchanges one cationic monoamine with two intravesicular protons across the membrane of secretory and synaptic vesicles. Uses the electrochemical proton gradient established by the V-type proton-pump ATPase to accumulate high concentrations of monoamines inside the vesicles prior to their release via exocytosis. Transports catecholamines and indolamines with higher affinity for serotonin (PubMed:1505023, PubMed:8125935). Regulates the transvesicular monoaminergic gradient that determines the quantal size. Mediates presynaptic monoaminergic vesicle transport in the amygdala and prefrontal brain regions related with emotion processing in response to environmental stimuli (By similarity).</text>
</comment>
<comment type="catalytic activity">
    <reaction evidence="5">
        <text>serotonin(in) + 2 H(+)(out) = serotonin(out) + 2 H(+)(in)</text>
        <dbReference type="Rhea" id="RHEA:73743"/>
        <dbReference type="ChEBI" id="CHEBI:15378"/>
        <dbReference type="ChEBI" id="CHEBI:350546"/>
    </reaction>
    <physiologicalReaction direction="left-to-right" evidence="9">
        <dbReference type="Rhea" id="RHEA:73744"/>
    </physiologicalReaction>
</comment>
<comment type="catalytic activity">
    <reaction evidence="1">
        <text>(R)-noradrenaline(in) + 2 H(+)(out) = (R)-noradrenaline(out) + 2 H(+)(in)</text>
        <dbReference type="Rhea" id="RHEA:73747"/>
        <dbReference type="ChEBI" id="CHEBI:15378"/>
        <dbReference type="ChEBI" id="CHEBI:72587"/>
    </reaction>
    <physiologicalReaction direction="left-to-right" evidence="1">
        <dbReference type="Rhea" id="RHEA:73748"/>
    </physiologicalReaction>
</comment>
<comment type="catalytic activity">
    <reaction evidence="4">
        <text>dopamine(in) + 2 H(+)(out) = dopamine(out) + 2 H(+)(in)</text>
        <dbReference type="Rhea" id="RHEA:73739"/>
        <dbReference type="ChEBI" id="CHEBI:15378"/>
        <dbReference type="ChEBI" id="CHEBI:59905"/>
    </reaction>
    <physiologicalReaction direction="left-to-right" evidence="8">
        <dbReference type="Rhea" id="RHEA:73740"/>
    </physiologicalReaction>
</comment>
<comment type="activity regulation">
    <text evidence="4 5">Strongly inhibited by reserpine, ketanserin and methamphetamine. Also inhibited weakly by tetrabenazine.</text>
</comment>
<comment type="biophysicochemical properties">
    <kinetics>
        <KM evidence="5">0.85 uM for serotonin</KM>
    </kinetics>
</comment>
<comment type="subcellular location">
    <subcellularLocation>
        <location evidence="1">Cytoplasmic vesicle</location>
        <location evidence="1">Secretory vesicle membrane</location>
        <topology evidence="3">Multi-pass membrane protein</topology>
    </subcellularLocation>
    <subcellularLocation>
        <location evidence="2">Cytoplasmic vesicle</location>
        <location evidence="2">Secretory vesicle</location>
        <location evidence="2">Synaptic vesicle membrane</location>
        <topology evidence="3">Multi-pass membrane protein</topology>
    </subcellularLocation>
</comment>
<comment type="tissue specificity">
    <text evidence="4">Adrenal gland.</text>
</comment>
<comment type="similarity">
    <text evidence="7">Belongs to the major facilitator superfamily. Vesicular transporter family.</text>
</comment>
<evidence type="ECO:0000250" key="1">
    <source>
        <dbReference type="UniProtKB" id="P54219"/>
    </source>
</evidence>
<evidence type="ECO:0000250" key="2">
    <source>
        <dbReference type="UniProtKB" id="Q8R090"/>
    </source>
</evidence>
<evidence type="ECO:0000255" key="3"/>
<evidence type="ECO:0000269" key="4">
    <source>
    </source>
</evidence>
<evidence type="ECO:0000269" key="5">
    <source>
    </source>
</evidence>
<evidence type="ECO:0000303" key="6">
    <source>
    </source>
</evidence>
<evidence type="ECO:0000305" key="7"/>
<evidence type="ECO:0000305" key="8">
    <source>
    </source>
</evidence>
<evidence type="ECO:0000305" key="9">
    <source>
    </source>
</evidence>
<dbReference type="EMBL" id="M97380">
    <property type="protein sequence ID" value="AAA40921.1"/>
    <property type="molecule type" value="mRNA"/>
</dbReference>
<dbReference type="PIR" id="A43319">
    <property type="entry name" value="A43319"/>
</dbReference>
<dbReference type="RefSeq" id="NP_037284.2">
    <property type="nucleotide sequence ID" value="NM_013152.2"/>
</dbReference>
<dbReference type="SMR" id="Q01818"/>
<dbReference type="CORUM" id="Q01818"/>
<dbReference type="FunCoup" id="Q01818">
    <property type="interactions" value="92"/>
</dbReference>
<dbReference type="STRING" id="10116.ENSRNOP00000016193"/>
<dbReference type="TCDB" id="2.A.1.2.11">
    <property type="family name" value="the major facilitator superfamily (mfs)"/>
</dbReference>
<dbReference type="GlyCosmos" id="Q01818">
    <property type="glycosylation" value="3 sites, No reported glycans"/>
</dbReference>
<dbReference type="GlyGen" id="Q01818">
    <property type="glycosylation" value="3 sites"/>
</dbReference>
<dbReference type="PhosphoSitePlus" id="Q01818"/>
<dbReference type="jPOST" id="Q01818"/>
<dbReference type="PaxDb" id="10116-ENSRNOP00000016193"/>
<dbReference type="GeneID" id="25693"/>
<dbReference type="KEGG" id="rno:25693"/>
<dbReference type="UCSC" id="RGD:3693">
    <property type="organism name" value="rat"/>
</dbReference>
<dbReference type="AGR" id="RGD:3693"/>
<dbReference type="CTD" id="6570"/>
<dbReference type="RGD" id="3693">
    <property type="gene designation" value="Slc18a1"/>
</dbReference>
<dbReference type="eggNOG" id="KOG3764">
    <property type="taxonomic scope" value="Eukaryota"/>
</dbReference>
<dbReference type="InParanoid" id="Q01818"/>
<dbReference type="OrthoDB" id="51216at9989"/>
<dbReference type="PhylomeDB" id="Q01818"/>
<dbReference type="Reactome" id="R-RNO-442660">
    <property type="pathway name" value="Na+/Cl- dependent neurotransmitter transporters"/>
</dbReference>
<dbReference type="PRO" id="PR:Q01818"/>
<dbReference type="Proteomes" id="UP000002494">
    <property type="component" value="Unplaced"/>
</dbReference>
<dbReference type="GO" id="GO:0045202">
    <property type="term" value="C:synapse"/>
    <property type="evidence" value="ECO:0000266"/>
    <property type="project" value="RGD"/>
</dbReference>
<dbReference type="GO" id="GO:0030672">
    <property type="term" value="C:synaptic vesicle membrane"/>
    <property type="evidence" value="ECO:0000318"/>
    <property type="project" value="GO_Central"/>
</dbReference>
<dbReference type="GO" id="GO:0043195">
    <property type="term" value="C:terminal bouton"/>
    <property type="evidence" value="ECO:0000318"/>
    <property type="project" value="GO_Central"/>
</dbReference>
<dbReference type="GO" id="GO:0019899">
    <property type="term" value="F:enzyme binding"/>
    <property type="evidence" value="ECO:0000353"/>
    <property type="project" value="RGD"/>
</dbReference>
<dbReference type="GO" id="GO:0015311">
    <property type="term" value="F:monoamine:proton antiporter activity"/>
    <property type="evidence" value="ECO:0000314"/>
    <property type="project" value="UniProtKB"/>
</dbReference>
<dbReference type="GO" id="GO:0005335">
    <property type="term" value="F:serotonin:sodium:chloride symporter activity"/>
    <property type="evidence" value="ECO:0000314"/>
    <property type="project" value="RGD"/>
</dbReference>
<dbReference type="GO" id="GO:0042910">
    <property type="term" value="F:xenobiotic transmembrane transporter activity"/>
    <property type="evidence" value="ECO:0007669"/>
    <property type="project" value="InterPro"/>
</dbReference>
<dbReference type="GO" id="GO:0015842">
    <property type="term" value="P:aminergic neurotransmitter loading into synaptic vesicle"/>
    <property type="evidence" value="ECO:0000318"/>
    <property type="project" value="GO_Central"/>
</dbReference>
<dbReference type="GO" id="GO:0071285">
    <property type="term" value="P:cellular response to lithium ion"/>
    <property type="evidence" value="ECO:0000270"/>
    <property type="project" value="RGD"/>
</dbReference>
<dbReference type="GO" id="GO:0051612">
    <property type="term" value="P:negative regulation of serotonin uptake"/>
    <property type="evidence" value="ECO:0000315"/>
    <property type="project" value="RGD"/>
</dbReference>
<dbReference type="GO" id="GO:0033603">
    <property type="term" value="P:positive regulation of dopamine secretion"/>
    <property type="evidence" value="ECO:0000315"/>
    <property type="project" value="RGD"/>
</dbReference>
<dbReference type="GO" id="GO:0051610">
    <property type="term" value="P:serotonin uptake"/>
    <property type="evidence" value="ECO:0000314"/>
    <property type="project" value="UniProtKB"/>
</dbReference>
<dbReference type="CDD" id="cd17384">
    <property type="entry name" value="MFS_SLC18A1_2_VAT1_2"/>
    <property type="match status" value="1"/>
</dbReference>
<dbReference type="FunFam" id="1.20.1250.20:FF:000083">
    <property type="entry name" value="synaptic vesicular amine transporter isoform X1"/>
    <property type="match status" value="1"/>
</dbReference>
<dbReference type="FunFam" id="1.20.1250.20:FF:000116">
    <property type="entry name" value="synaptic vesicular amine transporter isoform X2"/>
    <property type="match status" value="1"/>
</dbReference>
<dbReference type="Gene3D" id="1.20.1250.20">
    <property type="entry name" value="MFS general substrate transporter like domains"/>
    <property type="match status" value="2"/>
</dbReference>
<dbReference type="InterPro" id="IPR011701">
    <property type="entry name" value="MFS"/>
</dbReference>
<dbReference type="InterPro" id="IPR020846">
    <property type="entry name" value="MFS_dom"/>
</dbReference>
<dbReference type="InterPro" id="IPR036259">
    <property type="entry name" value="MFS_trans_sf"/>
</dbReference>
<dbReference type="InterPro" id="IPR050930">
    <property type="entry name" value="MFS_Vesicular_Transporter"/>
</dbReference>
<dbReference type="InterPro" id="IPR004734">
    <property type="entry name" value="Multidrug-R"/>
</dbReference>
<dbReference type="NCBIfam" id="TIGR00880">
    <property type="entry name" value="2_A_01_02"/>
    <property type="match status" value="1"/>
</dbReference>
<dbReference type="PANTHER" id="PTHR23506:SF31">
    <property type="entry name" value="CHROMAFFIN GRANULE AMINE TRANSPORTER"/>
    <property type="match status" value="1"/>
</dbReference>
<dbReference type="PANTHER" id="PTHR23506">
    <property type="entry name" value="GH10249P"/>
    <property type="match status" value="1"/>
</dbReference>
<dbReference type="Pfam" id="PF07690">
    <property type="entry name" value="MFS_1"/>
    <property type="match status" value="1"/>
</dbReference>
<dbReference type="SUPFAM" id="SSF103473">
    <property type="entry name" value="MFS general substrate transporter"/>
    <property type="match status" value="1"/>
</dbReference>
<dbReference type="PROSITE" id="PS50850">
    <property type="entry name" value="MFS"/>
    <property type="match status" value="1"/>
</dbReference>
<reference key="1">
    <citation type="journal article" date="1992" name="Cell">
        <title>A cDNA that suppresses MPP+ toxicity encodes a vesicular amine transporter.</title>
        <authorList>
            <person name="Liu Y."/>
            <person name="Peter D."/>
            <person name="Roghani A."/>
            <person name="Schuldiner S."/>
            <person name="Prive G.G."/>
            <person name="Eisenberg D."/>
            <person name="Brecha N."/>
            <person name="Edwards R.H."/>
        </authorList>
    </citation>
    <scope>NUCLEOTIDE SEQUENCE [MRNA]</scope>
    <scope>FUNCTION</scope>
    <scope>TRANSPORT ACTIVITY</scope>
    <scope>ACTIVITY REGULATION</scope>
    <scope>TISSUE SPECIFICITY</scope>
</reference>
<reference key="2">
    <citation type="journal article" date="1994" name="J. Biol. Chem.">
        <title>The chromaffin granule and synaptic vesicle amine transporters differ in substrate recognition and sensitivity to inhibitors.</title>
        <authorList>
            <person name="Peter D."/>
            <person name="Jimenez J."/>
            <person name="Liu Y."/>
            <person name="Kim J."/>
            <person name="Edwards R.H."/>
        </authorList>
    </citation>
    <scope>FUNCTION</scope>
    <scope>TRANSPORT ACTIVITY</scope>
    <scope>ACTIVITY REGULATION</scope>
    <scope>BIOPHYSICOCHEMICAL PROPERTIES</scope>
</reference>
<sequence length="521" mass="55935">MLQVVLGAPQRLLKEGRQSRKLVLVVVFVALLLDNMLLTVVVPIVPTFLYATEFKDSNSSLHRGPSVSSQQALTSPAFSTIFSFFDNTTTTVEEHVPFRVTWTNGTIPPPVTEASSVPKNNCLQGIEFLEEENVRIGILFASKALMQLLVNPFVGPLTNRIGYHIPMFVGFMIMFLSTLMFAFSGTYALLFVARTLQGIGSSFSSVAGLGMLASVYTDNYERGRAMGIALGGLALGLLVGAPFGSVMYEFVGKSSPFLILAFLALLDGALQLCILWPSKVSPESAMGTSLLTLLKDPYILVAAGSICLANMGVAILEPTLPIWMMQTMCSPEWQLGLAFLPASVAYLIGTNLFGVLANKMGRWLCSLVGMVAVGISLLCVPLAHNIFGLIGPNAGLGFAIGMVDSSLMPIMGYLVDLRHTSVYGSVYAIADVAFCVGFAIGPSTGGVIVQVIGFPWLMVIIGTINIIYAPLCCFLQNPPAKEEKRAILSQECPTETQMYTFQKPTKAFPLGENSDDPSSGE</sequence>
<protein>
    <recommendedName>
        <fullName>Chromaffin granule amine transporter</fullName>
    </recommendedName>
    <alternativeName>
        <fullName>Solute carrier family 18 member 1</fullName>
    </alternativeName>
    <alternativeName>
        <fullName>Vesicular amine transporter 1</fullName>
        <shortName>VAT1</shortName>
    </alternativeName>
</protein>
<feature type="chain" id="PRO_0000127512" description="Chromaffin granule amine transporter">
    <location>
        <begin position="1"/>
        <end position="521"/>
    </location>
</feature>
<feature type="topological domain" description="Cytoplasmic" evidence="3">
    <location>
        <begin position="1"/>
        <end position="21"/>
    </location>
</feature>
<feature type="transmembrane region" description="Helical" evidence="3">
    <location>
        <begin position="22"/>
        <end position="42"/>
    </location>
</feature>
<feature type="topological domain" description="Lumenal, vesicle" evidence="3">
    <location>
        <begin position="43"/>
        <end position="135"/>
    </location>
</feature>
<feature type="transmembrane region" description="Helical" evidence="3">
    <location>
        <begin position="136"/>
        <end position="155"/>
    </location>
</feature>
<feature type="topological domain" description="Cytoplasmic" evidence="3">
    <location>
        <begin position="156"/>
        <end position="164"/>
    </location>
</feature>
<feature type="transmembrane region" description="Helical" evidence="3">
    <location>
        <begin position="165"/>
        <end position="185"/>
    </location>
</feature>
<feature type="topological domain" description="Lumenal, vesicle" evidence="3">
    <location>
        <begin position="186"/>
        <end position="194"/>
    </location>
</feature>
<feature type="transmembrane region" description="Helical" evidence="3">
    <location>
        <begin position="195"/>
        <end position="215"/>
    </location>
</feature>
<feature type="topological domain" description="Cytoplasmic" evidence="3">
    <location>
        <begin position="216"/>
        <end position="224"/>
    </location>
</feature>
<feature type="transmembrane region" description="Helical" evidence="3">
    <location>
        <begin position="225"/>
        <end position="247"/>
    </location>
</feature>
<feature type="topological domain" description="Lumenal, vesicle" evidence="3">
    <location>
        <begin position="248"/>
        <end position="253"/>
    </location>
</feature>
<feature type="transmembrane region" description="Helical" evidence="3">
    <location>
        <begin position="254"/>
        <end position="276"/>
    </location>
</feature>
<feature type="topological domain" description="Cytoplasmic" evidence="3">
    <location>
        <begin position="277"/>
        <end position="296"/>
    </location>
</feature>
<feature type="transmembrane region" description="Helical" evidence="3">
    <location>
        <begin position="297"/>
        <end position="316"/>
    </location>
</feature>
<feature type="topological domain" description="Lumenal, vesicle" evidence="3">
    <location>
        <begin position="317"/>
        <end position="332"/>
    </location>
</feature>
<feature type="transmembrane region" description="Helical" evidence="3">
    <location>
        <begin position="333"/>
        <end position="357"/>
    </location>
</feature>
<feature type="topological domain" description="Cytoplasmic" evidence="3">
    <location>
        <begin position="358"/>
        <end position="362"/>
    </location>
</feature>
<feature type="transmembrane region" description="Helical" evidence="3">
    <location>
        <begin position="363"/>
        <end position="383"/>
    </location>
</feature>
<feature type="topological domain" description="Lumenal, vesicle" evidence="3">
    <location>
        <begin position="384"/>
        <end position="394"/>
    </location>
</feature>
<feature type="transmembrane region" description="Helical" evidence="3">
    <location>
        <begin position="395"/>
        <end position="415"/>
    </location>
</feature>
<feature type="topological domain" description="Cytoplasmic" evidence="3">
    <location>
        <begin position="416"/>
        <end position="419"/>
    </location>
</feature>
<feature type="transmembrane region" description="Helical" evidence="3">
    <location>
        <begin position="420"/>
        <end position="440"/>
    </location>
</feature>
<feature type="topological domain" description="Lumenal, vesicle" evidence="3">
    <location>
        <begin position="441"/>
        <end position="445"/>
    </location>
</feature>
<feature type="transmembrane region" description="Helical" evidence="3">
    <location>
        <begin position="446"/>
        <end position="467"/>
    </location>
</feature>
<feature type="topological domain" description="Cytoplasmic" evidence="3">
    <location>
        <begin position="468"/>
        <end position="521"/>
    </location>
</feature>
<feature type="glycosylation site" description="N-linked (GlcNAc...) asparagine" evidence="3">
    <location>
        <position position="58"/>
    </location>
</feature>
<feature type="glycosylation site" description="N-linked (GlcNAc...) asparagine" evidence="3">
    <location>
        <position position="87"/>
    </location>
</feature>
<feature type="glycosylation site" description="N-linked (GlcNAc...) asparagine" evidence="3">
    <location>
        <position position="104"/>
    </location>
</feature>
<organism>
    <name type="scientific">Rattus norvegicus</name>
    <name type="common">Rat</name>
    <dbReference type="NCBI Taxonomy" id="10116"/>
    <lineage>
        <taxon>Eukaryota</taxon>
        <taxon>Metazoa</taxon>
        <taxon>Chordata</taxon>
        <taxon>Craniata</taxon>
        <taxon>Vertebrata</taxon>
        <taxon>Euteleostomi</taxon>
        <taxon>Mammalia</taxon>
        <taxon>Eutheria</taxon>
        <taxon>Euarchontoglires</taxon>
        <taxon>Glires</taxon>
        <taxon>Rodentia</taxon>
        <taxon>Myomorpha</taxon>
        <taxon>Muroidea</taxon>
        <taxon>Muridae</taxon>
        <taxon>Murinae</taxon>
        <taxon>Rattus</taxon>
    </lineage>
</organism>